<feature type="chain" id="PRO_0000131898" description="Cytidylate kinase">
    <location>
        <begin position="1"/>
        <end position="216"/>
    </location>
</feature>
<feature type="binding site" evidence="1">
    <location>
        <begin position="7"/>
        <end position="15"/>
    </location>
    <ligand>
        <name>ATP</name>
        <dbReference type="ChEBI" id="CHEBI:30616"/>
    </ligand>
</feature>
<reference key="1">
    <citation type="journal article" date="2003" name="Nucleic Acids Res.">
        <title>Genome sequence of Chlamydophila caviae (Chlamydia psittaci GPIC): examining the role of niche-specific genes in the evolution of the Chlamydiaceae.</title>
        <authorList>
            <person name="Read T.D."/>
            <person name="Myers G.S.A."/>
            <person name="Brunham R.C."/>
            <person name="Nelson W.C."/>
            <person name="Paulsen I.T."/>
            <person name="Heidelberg J.F."/>
            <person name="Holtzapple E.K."/>
            <person name="Khouri H.M."/>
            <person name="Federova N.B."/>
            <person name="Carty H.A."/>
            <person name="Umayam L.A."/>
            <person name="Haft D.H."/>
            <person name="Peterson J.D."/>
            <person name="Beanan M.J."/>
            <person name="White O."/>
            <person name="Salzberg S.L."/>
            <person name="Hsia R.-C."/>
            <person name="McClarty G."/>
            <person name="Rank R.G."/>
            <person name="Bavoil P.M."/>
            <person name="Fraser C.M."/>
        </authorList>
    </citation>
    <scope>NUCLEOTIDE SEQUENCE [LARGE SCALE GENOMIC DNA]</scope>
    <source>
        <strain>ATCC VR-813 / DSM 19441 / 03DC25 / GPIC</strain>
    </source>
</reference>
<keyword id="KW-0067">ATP-binding</keyword>
<keyword id="KW-0963">Cytoplasm</keyword>
<keyword id="KW-0418">Kinase</keyword>
<keyword id="KW-0547">Nucleotide-binding</keyword>
<keyword id="KW-0808">Transferase</keyword>
<proteinExistence type="inferred from homology"/>
<name>KCY_CHLCV</name>
<evidence type="ECO:0000255" key="1">
    <source>
        <dbReference type="HAMAP-Rule" id="MF_00238"/>
    </source>
</evidence>
<accession>Q824H2</accession>
<dbReference type="EC" id="2.7.4.25" evidence="1"/>
<dbReference type="EMBL" id="AE015925">
    <property type="protein sequence ID" value="AAP04925.1"/>
    <property type="molecule type" value="Genomic_DNA"/>
</dbReference>
<dbReference type="RefSeq" id="WP_011006146.1">
    <property type="nucleotide sequence ID" value="NC_003361.3"/>
</dbReference>
<dbReference type="SMR" id="Q824H2"/>
<dbReference type="STRING" id="227941.CCA_00174"/>
<dbReference type="KEGG" id="cca:CCA_00174"/>
<dbReference type="eggNOG" id="COG0283">
    <property type="taxonomic scope" value="Bacteria"/>
</dbReference>
<dbReference type="HOGENOM" id="CLU_079959_0_2_0"/>
<dbReference type="OrthoDB" id="9807434at2"/>
<dbReference type="Proteomes" id="UP000002193">
    <property type="component" value="Chromosome"/>
</dbReference>
<dbReference type="GO" id="GO:0005737">
    <property type="term" value="C:cytoplasm"/>
    <property type="evidence" value="ECO:0007669"/>
    <property type="project" value="UniProtKB-SubCell"/>
</dbReference>
<dbReference type="GO" id="GO:0005524">
    <property type="term" value="F:ATP binding"/>
    <property type="evidence" value="ECO:0007669"/>
    <property type="project" value="UniProtKB-UniRule"/>
</dbReference>
<dbReference type="GO" id="GO:0036430">
    <property type="term" value="F:CMP kinase activity"/>
    <property type="evidence" value="ECO:0007669"/>
    <property type="project" value="RHEA"/>
</dbReference>
<dbReference type="GO" id="GO:0036431">
    <property type="term" value="F:dCMP kinase activity"/>
    <property type="evidence" value="ECO:0007669"/>
    <property type="project" value="RHEA"/>
</dbReference>
<dbReference type="GO" id="GO:0006220">
    <property type="term" value="P:pyrimidine nucleotide metabolic process"/>
    <property type="evidence" value="ECO:0007669"/>
    <property type="project" value="UniProtKB-UniRule"/>
</dbReference>
<dbReference type="CDD" id="cd02020">
    <property type="entry name" value="CMPK"/>
    <property type="match status" value="1"/>
</dbReference>
<dbReference type="FunFam" id="3.40.50.300:FF:003002">
    <property type="entry name" value="Cytidylate kinase"/>
    <property type="match status" value="1"/>
</dbReference>
<dbReference type="Gene3D" id="3.40.50.300">
    <property type="entry name" value="P-loop containing nucleotide triphosphate hydrolases"/>
    <property type="match status" value="1"/>
</dbReference>
<dbReference type="HAMAP" id="MF_00238">
    <property type="entry name" value="Cytidyl_kinase_type1"/>
    <property type="match status" value="1"/>
</dbReference>
<dbReference type="InterPro" id="IPR003136">
    <property type="entry name" value="Cytidylate_kin"/>
</dbReference>
<dbReference type="InterPro" id="IPR011994">
    <property type="entry name" value="Cytidylate_kinase_dom"/>
</dbReference>
<dbReference type="InterPro" id="IPR027417">
    <property type="entry name" value="P-loop_NTPase"/>
</dbReference>
<dbReference type="NCBIfam" id="TIGR00017">
    <property type="entry name" value="cmk"/>
    <property type="match status" value="1"/>
</dbReference>
<dbReference type="Pfam" id="PF02224">
    <property type="entry name" value="Cytidylate_kin"/>
    <property type="match status" value="1"/>
</dbReference>
<dbReference type="SUPFAM" id="SSF52540">
    <property type="entry name" value="P-loop containing nucleoside triphosphate hydrolases"/>
    <property type="match status" value="1"/>
</dbReference>
<protein>
    <recommendedName>
        <fullName evidence="1">Cytidylate kinase</fullName>
        <shortName evidence="1">CK</shortName>
        <ecNumber evidence="1">2.7.4.25</ecNumber>
    </recommendedName>
    <alternativeName>
        <fullName evidence="1">Cytidine monophosphate kinase</fullName>
        <shortName evidence="1">CMP kinase</shortName>
    </alternativeName>
</protein>
<comment type="catalytic activity">
    <reaction evidence="1">
        <text>CMP + ATP = CDP + ADP</text>
        <dbReference type="Rhea" id="RHEA:11600"/>
        <dbReference type="ChEBI" id="CHEBI:30616"/>
        <dbReference type="ChEBI" id="CHEBI:58069"/>
        <dbReference type="ChEBI" id="CHEBI:60377"/>
        <dbReference type="ChEBI" id="CHEBI:456216"/>
        <dbReference type="EC" id="2.7.4.25"/>
    </reaction>
</comment>
<comment type="catalytic activity">
    <reaction evidence="1">
        <text>dCMP + ATP = dCDP + ADP</text>
        <dbReference type="Rhea" id="RHEA:25094"/>
        <dbReference type="ChEBI" id="CHEBI:30616"/>
        <dbReference type="ChEBI" id="CHEBI:57566"/>
        <dbReference type="ChEBI" id="CHEBI:58593"/>
        <dbReference type="ChEBI" id="CHEBI:456216"/>
        <dbReference type="EC" id="2.7.4.25"/>
    </reaction>
</comment>
<comment type="subcellular location">
    <subcellularLocation>
        <location evidence="1">Cytoplasm</location>
    </subcellularLocation>
</comment>
<comment type="similarity">
    <text evidence="1">Belongs to the cytidylate kinase family. Type 1 subfamily.</text>
</comment>
<organism>
    <name type="scientific">Chlamydia caviae (strain ATCC VR-813 / DSM 19441 / 03DC25 / GPIC)</name>
    <name type="common">Chlamydophila caviae</name>
    <dbReference type="NCBI Taxonomy" id="227941"/>
    <lineage>
        <taxon>Bacteria</taxon>
        <taxon>Pseudomonadati</taxon>
        <taxon>Chlamydiota</taxon>
        <taxon>Chlamydiia</taxon>
        <taxon>Chlamydiales</taxon>
        <taxon>Chlamydiaceae</taxon>
        <taxon>Chlamydia/Chlamydophila group</taxon>
        <taxon>Chlamydia</taxon>
    </lineage>
</organism>
<gene>
    <name evidence="1" type="primary">cmk</name>
    <name type="ordered locus">CCA_00174</name>
</gene>
<sequence>MIITIDGPSGTGKSTIAKALATELNFNYCNTGAMYRTLAYTHLQEPWQALPIKELIDNPPFSFSFISGQPLEAFLEGQLLSAELGTQEVANAASKLSQLPEVRSFMHKLQRKYAELGNCVFEGRDMGSKVFPDADVKIFLTASAEVRASRRLKDLPENSLSKEALHAELVKRDEADSQRLHDPLIIPEGAIILDSSDLTISQVLEKILALVSPNLP</sequence>